<keyword id="KW-0029">Amino-acid transport</keyword>
<keyword id="KW-1003">Cell membrane</keyword>
<keyword id="KW-0472">Membrane</keyword>
<keyword id="KW-1185">Reference proteome</keyword>
<keyword id="KW-0812">Transmembrane</keyword>
<keyword id="KW-1133">Transmembrane helix</keyword>
<keyword id="KW-0813">Transport</keyword>
<proteinExistence type="inferred from homology"/>
<dbReference type="EMBL" id="LT708304">
    <property type="protein sequence ID" value="SIU00758.1"/>
    <property type="molecule type" value="Genomic_DNA"/>
</dbReference>
<dbReference type="RefSeq" id="NP_855800.1">
    <property type="nucleotide sequence ID" value="NC_002945.3"/>
</dbReference>
<dbReference type="RefSeq" id="WP_010950662.1">
    <property type="nucleotide sequence ID" value="NC_002945.4"/>
</dbReference>
<dbReference type="SMR" id="Q7VEQ4"/>
<dbReference type="KEGG" id="mbo:BQ2027_MB2151"/>
<dbReference type="PATRIC" id="fig|233413.5.peg.2365"/>
<dbReference type="Proteomes" id="UP000001419">
    <property type="component" value="Chromosome"/>
</dbReference>
<dbReference type="GO" id="GO:0005886">
    <property type="term" value="C:plasma membrane"/>
    <property type="evidence" value="ECO:0007669"/>
    <property type="project" value="UniProtKB-SubCell"/>
</dbReference>
<dbReference type="GO" id="GO:0006865">
    <property type="term" value="P:amino acid transport"/>
    <property type="evidence" value="ECO:0007669"/>
    <property type="project" value="UniProtKB-KW"/>
</dbReference>
<dbReference type="GO" id="GO:0055085">
    <property type="term" value="P:transmembrane transport"/>
    <property type="evidence" value="ECO:0007669"/>
    <property type="project" value="InterPro"/>
</dbReference>
<dbReference type="FunFam" id="1.20.1740.10:FF:000001">
    <property type="entry name" value="Amino acid permease"/>
    <property type="match status" value="1"/>
</dbReference>
<dbReference type="Gene3D" id="1.20.1740.10">
    <property type="entry name" value="Amino acid/polyamine transporter I"/>
    <property type="match status" value="1"/>
</dbReference>
<dbReference type="InterPro" id="IPR004841">
    <property type="entry name" value="AA-permease/SLC12A_dom"/>
</dbReference>
<dbReference type="InterPro" id="IPR004840">
    <property type="entry name" value="Amino_acid_permease_CS"/>
</dbReference>
<dbReference type="PANTHER" id="PTHR43495">
    <property type="entry name" value="GABA PERMEASE"/>
    <property type="match status" value="1"/>
</dbReference>
<dbReference type="PANTHER" id="PTHR43495:SF1">
    <property type="entry name" value="L-ASPARAGINE PERMEASE"/>
    <property type="match status" value="1"/>
</dbReference>
<dbReference type="Pfam" id="PF00324">
    <property type="entry name" value="AA_permease"/>
    <property type="match status" value="1"/>
</dbReference>
<dbReference type="PIRSF" id="PIRSF006060">
    <property type="entry name" value="AA_transporter"/>
    <property type="match status" value="1"/>
</dbReference>
<dbReference type="PROSITE" id="PS00218">
    <property type="entry name" value="AMINO_ACID_PERMEASE_1"/>
    <property type="match status" value="1"/>
</dbReference>
<sequence length="489" mass="52535">MSAASQRVDAFGEEAGYHKGLKPRQLQMIGIGGAIGTGLFLGASGRLAKAGPGLFLVYGVCGVFVFLILRALGELVLHRPSSGSFVSYAREFFGEKAAYAVGWMYFLHWAMTSIVDTTAIATYLQRWTIFTVVPQWILALIALTVVLSMNLISVEWFGELEFWAALIKVLALMAFLVVGTVFLAGRYPVDGHSTGLSLWNNHGGLFPTSWLPLLIVTSGVVFAYSAVELVGTAAGETAEPEKIMPRAINSVVARIAIFYVGSVALLALLLPYTAYKAGESPFVTFFSKIGFHGAGDLMNIVVLTAALSSLNAGLYSTGRVMHSIAMSGSAPRFTARMSKSGVPYGGIVLTAVITLFGVALNAFKPGEAFEIVLNMSALGIIAGWATIVLCQLRLHKLANAGIMQRPRFRMPFSPYSGYLTLLFLLVVLVTMASDKPIGTWTVATLIIVIPALTAGWYLVRKRVMAVARERLGHTGPFPAVANPPVRSRD</sequence>
<evidence type="ECO:0000250" key="1"/>
<evidence type="ECO:0000255" key="2"/>
<evidence type="ECO:0000305" key="3"/>
<protein>
    <recommendedName>
        <fullName>L-asparagine permease 1</fullName>
    </recommendedName>
    <alternativeName>
        <fullName>L-asparagine transport protein 1</fullName>
    </alternativeName>
</protein>
<accession>Q7VEQ4</accession>
<accession>A0A1R3Y082</accession>
<accession>X2BJS3</accession>
<gene>
    <name type="primary">ansP1</name>
    <name type="ordered locus">BQ2027_MB2151</name>
</gene>
<name>ANSP1_MYCBO</name>
<feature type="chain" id="PRO_0000054187" description="L-asparagine permease 1">
    <location>
        <begin position="1"/>
        <end position="489"/>
    </location>
</feature>
<feature type="transmembrane region" description="Helical" evidence="2">
    <location>
        <begin position="25"/>
        <end position="45"/>
    </location>
</feature>
<feature type="transmembrane region" description="Helical" evidence="2">
    <location>
        <begin position="49"/>
        <end position="69"/>
    </location>
</feature>
<feature type="transmembrane region" description="Helical" evidence="2">
    <location>
        <begin position="100"/>
        <end position="120"/>
    </location>
</feature>
<feature type="transmembrane region" description="Helical" evidence="2">
    <location>
        <begin position="137"/>
        <end position="157"/>
    </location>
</feature>
<feature type="transmembrane region" description="Helical" evidence="2">
    <location>
        <begin position="162"/>
        <end position="182"/>
    </location>
</feature>
<feature type="transmembrane region" description="Helical" evidence="2">
    <location>
        <begin position="210"/>
        <end position="230"/>
    </location>
</feature>
<feature type="transmembrane region" description="Helical" evidence="2">
    <location>
        <begin position="255"/>
        <end position="275"/>
    </location>
</feature>
<feature type="transmembrane region" description="Helical" evidence="2">
    <location>
        <begin position="289"/>
        <end position="309"/>
    </location>
</feature>
<feature type="transmembrane region" description="Helical" evidence="2">
    <location>
        <begin position="344"/>
        <end position="364"/>
    </location>
</feature>
<feature type="transmembrane region" description="Helical" evidence="2">
    <location>
        <begin position="369"/>
        <end position="389"/>
    </location>
</feature>
<feature type="transmembrane region" description="Helical" evidence="2">
    <location>
        <begin position="413"/>
        <end position="433"/>
    </location>
</feature>
<feature type="transmembrane region" description="Helical" evidence="2">
    <location>
        <begin position="439"/>
        <end position="459"/>
    </location>
</feature>
<organism>
    <name type="scientific">Mycobacterium bovis (strain ATCC BAA-935 / AF2122/97)</name>
    <dbReference type="NCBI Taxonomy" id="233413"/>
    <lineage>
        <taxon>Bacteria</taxon>
        <taxon>Bacillati</taxon>
        <taxon>Actinomycetota</taxon>
        <taxon>Actinomycetes</taxon>
        <taxon>Mycobacteriales</taxon>
        <taxon>Mycobacteriaceae</taxon>
        <taxon>Mycobacterium</taxon>
        <taxon>Mycobacterium tuberculosis complex</taxon>
    </lineage>
</organism>
<reference key="1">
    <citation type="journal article" date="2003" name="Proc. Natl. Acad. Sci. U.S.A.">
        <title>The complete genome sequence of Mycobacterium bovis.</title>
        <authorList>
            <person name="Garnier T."/>
            <person name="Eiglmeier K."/>
            <person name="Camus J.-C."/>
            <person name="Medina N."/>
            <person name="Mansoor H."/>
            <person name="Pryor M."/>
            <person name="Duthoy S."/>
            <person name="Grondin S."/>
            <person name="Lacroix C."/>
            <person name="Monsempe C."/>
            <person name="Simon S."/>
            <person name="Harris B."/>
            <person name="Atkin R."/>
            <person name="Doggett J."/>
            <person name="Mayes R."/>
            <person name="Keating L."/>
            <person name="Wheeler P.R."/>
            <person name="Parkhill J."/>
            <person name="Barrell B.G."/>
            <person name="Cole S.T."/>
            <person name="Gordon S.V."/>
            <person name="Hewinson R.G."/>
        </authorList>
    </citation>
    <scope>NUCLEOTIDE SEQUENCE [LARGE SCALE GENOMIC DNA]</scope>
    <source>
        <strain>ATCC BAA-935 / AF2122/97</strain>
    </source>
</reference>
<reference key="2">
    <citation type="journal article" date="2017" name="Genome Announc.">
        <title>Updated reference genome sequence and annotation of Mycobacterium bovis AF2122/97.</title>
        <authorList>
            <person name="Malone K.M."/>
            <person name="Farrell D."/>
            <person name="Stuber T.P."/>
            <person name="Schubert O.T."/>
            <person name="Aebersold R."/>
            <person name="Robbe-Austerman S."/>
            <person name="Gordon S.V."/>
        </authorList>
    </citation>
    <scope>NUCLEOTIDE SEQUENCE [LARGE SCALE GENOMIC DNA]</scope>
    <scope>GENOME REANNOTATION</scope>
    <source>
        <strain>ATCC BAA-935 / AF2122/97</strain>
    </source>
</reference>
<comment type="subcellular location">
    <subcellularLocation>
        <location evidence="1">Cell membrane</location>
        <topology evidence="1">Multi-pass membrane protein</topology>
    </subcellularLocation>
</comment>
<comment type="similarity">
    <text evidence="3">Belongs to the amino acid-polyamine-organocation (APC) superfamily. Amino acid transporter (AAT) (TC 2.A.3.1) family.</text>
</comment>